<keyword id="KW-0067">ATP-binding</keyword>
<keyword id="KW-0963">Cytoplasm</keyword>
<keyword id="KW-0206">Cytoskeleton</keyword>
<keyword id="KW-0378">Hydrolase</keyword>
<keyword id="KW-0547">Nucleotide-binding</keyword>
<feature type="chain" id="PRO_0000088931" description="Actin-5">
    <location>
        <begin position="1" status="less than"/>
        <end position="371"/>
    </location>
</feature>
<feature type="non-terminal residue">
    <location>
        <position position="1"/>
    </location>
</feature>
<comment type="function">
    <text>Actins are highly conserved proteins that are involved in various types of cell motility and are ubiquitously expressed in all eukaryotic cells.</text>
</comment>
<comment type="catalytic activity">
    <reaction evidence="1">
        <text>ATP + H2O = ADP + phosphate + H(+)</text>
        <dbReference type="Rhea" id="RHEA:13065"/>
        <dbReference type="ChEBI" id="CHEBI:15377"/>
        <dbReference type="ChEBI" id="CHEBI:15378"/>
        <dbReference type="ChEBI" id="CHEBI:30616"/>
        <dbReference type="ChEBI" id="CHEBI:43474"/>
        <dbReference type="ChEBI" id="CHEBI:456216"/>
    </reaction>
</comment>
<comment type="subcellular location">
    <subcellularLocation>
        <location>Cytoplasm</location>
        <location>Cytoskeleton</location>
    </subcellularLocation>
</comment>
<comment type="similarity">
    <text evidence="2">Belongs to the actin family.</text>
</comment>
<organism>
    <name type="scientific">Dibothriocephalus dendriticus</name>
    <name type="common">Tapeworm</name>
    <name type="synonym">Diphyllobothrium dendriticum</name>
    <dbReference type="NCBI Taxonomy" id="28845"/>
    <lineage>
        <taxon>Eukaryota</taxon>
        <taxon>Metazoa</taxon>
        <taxon>Spiralia</taxon>
        <taxon>Lophotrochozoa</taxon>
        <taxon>Platyhelminthes</taxon>
        <taxon>Cestoda</taxon>
        <taxon>Eucestoda</taxon>
        <taxon>Diphyllobothriidea</taxon>
        <taxon>Diphyllobothriidae</taxon>
        <taxon>Dibothriocephalus</taxon>
    </lineage>
</organism>
<proteinExistence type="evidence at transcript level"/>
<name>ACT5_DIBDE</name>
<evidence type="ECO:0000250" key="1">
    <source>
        <dbReference type="UniProtKB" id="P68137"/>
    </source>
</evidence>
<evidence type="ECO:0000305" key="2"/>
<dbReference type="EC" id="3.6.4.-" evidence="1"/>
<dbReference type="EMBL" id="U27836">
    <property type="protein sequence ID" value="AAA82603.1"/>
    <property type="molecule type" value="mRNA"/>
</dbReference>
<dbReference type="SMR" id="P53458"/>
<dbReference type="GO" id="GO:0005737">
    <property type="term" value="C:cytoplasm"/>
    <property type="evidence" value="ECO:0007669"/>
    <property type="project" value="UniProtKB-KW"/>
</dbReference>
<dbReference type="GO" id="GO:0005856">
    <property type="term" value="C:cytoskeleton"/>
    <property type="evidence" value="ECO:0007669"/>
    <property type="project" value="UniProtKB-SubCell"/>
</dbReference>
<dbReference type="GO" id="GO:0005524">
    <property type="term" value="F:ATP binding"/>
    <property type="evidence" value="ECO:0007669"/>
    <property type="project" value="UniProtKB-KW"/>
</dbReference>
<dbReference type="GO" id="GO:0016787">
    <property type="term" value="F:hydrolase activity"/>
    <property type="evidence" value="ECO:0007669"/>
    <property type="project" value="UniProtKB-KW"/>
</dbReference>
<dbReference type="CDD" id="cd10224">
    <property type="entry name" value="ASKHA_NBD_actin"/>
    <property type="match status" value="1"/>
</dbReference>
<dbReference type="FunFam" id="2.30.36.70:FF:000001">
    <property type="entry name" value="Actin, alpha skeletal muscle"/>
    <property type="match status" value="1"/>
</dbReference>
<dbReference type="FunFam" id="3.30.420.40:FF:000131">
    <property type="entry name" value="Actin, alpha skeletal muscle"/>
    <property type="match status" value="1"/>
</dbReference>
<dbReference type="FunFam" id="3.30.420.40:FF:000291">
    <property type="entry name" value="Actin, alpha skeletal muscle"/>
    <property type="match status" value="1"/>
</dbReference>
<dbReference type="FunFam" id="3.90.640.10:FF:000047">
    <property type="entry name" value="Actin, alpha skeletal muscle"/>
    <property type="match status" value="1"/>
</dbReference>
<dbReference type="FunFam" id="3.30.420.40:FF:000058">
    <property type="entry name" value="Putative actin-related protein 5"/>
    <property type="match status" value="1"/>
</dbReference>
<dbReference type="Gene3D" id="3.30.420.40">
    <property type="match status" value="2"/>
</dbReference>
<dbReference type="Gene3D" id="3.90.640.10">
    <property type="entry name" value="Actin, Chain A, domain 4"/>
    <property type="match status" value="1"/>
</dbReference>
<dbReference type="InterPro" id="IPR004000">
    <property type="entry name" value="Actin"/>
</dbReference>
<dbReference type="InterPro" id="IPR020902">
    <property type="entry name" value="Actin/actin-like_CS"/>
</dbReference>
<dbReference type="InterPro" id="IPR004001">
    <property type="entry name" value="Actin_CS"/>
</dbReference>
<dbReference type="InterPro" id="IPR043129">
    <property type="entry name" value="ATPase_NBD"/>
</dbReference>
<dbReference type="PANTHER" id="PTHR11937">
    <property type="entry name" value="ACTIN"/>
    <property type="match status" value="1"/>
</dbReference>
<dbReference type="Pfam" id="PF00022">
    <property type="entry name" value="Actin"/>
    <property type="match status" value="1"/>
</dbReference>
<dbReference type="PRINTS" id="PR00190">
    <property type="entry name" value="ACTIN"/>
</dbReference>
<dbReference type="SMART" id="SM00268">
    <property type="entry name" value="ACTIN"/>
    <property type="match status" value="1"/>
</dbReference>
<dbReference type="SUPFAM" id="SSF53067">
    <property type="entry name" value="Actin-like ATPase domain"/>
    <property type="match status" value="2"/>
</dbReference>
<dbReference type="PROSITE" id="PS00406">
    <property type="entry name" value="ACTINS_1"/>
    <property type="match status" value="1"/>
</dbReference>
<dbReference type="PROSITE" id="PS00432">
    <property type="entry name" value="ACTINS_2"/>
    <property type="match status" value="1"/>
</dbReference>
<dbReference type="PROSITE" id="PS01132">
    <property type="entry name" value="ACTINS_ACT_LIKE"/>
    <property type="match status" value="1"/>
</dbReference>
<reference key="1">
    <citation type="journal article" date="1997" name="J. Mol. Evol.">
        <title>Isolation and characterization of five actin cDNAs from the cestode Diphyllobothrium dendriticum: a phylogenetic study of the multigene family.</title>
        <authorList>
            <person name="Wahlberg M.H."/>
            <person name="Johnson M.S."/>
        </authorList>
    </citation>
    <scope>NUCLEOTIDE SEQUENCE [MRNA]</scope>
</reference>
<accession>P53458</accession>
<protein>
    <recommendedName>
        <fullName>Actin-5</fullName>
        <ecNumber evidence="1">3.6.4.-</ecNumber>
    </recommendedName>
</protein>
<sequence length="371" mass="41183">IAALVIDNGSGMCKAGFAGDDAPRAVFPSIVGRPRHQGVMVGMGQKDSYVGDEAQSKRGILTLKYPIEHGIVTNWDDMEKIWHHTFYNELRVAPEEHPVLLTEAPLNPKANREKMTQIMFETFNSPAMYVAIQAVLSLYASGRTTGIVLDSGDGVTHTVPIYEGYALPHAILRLDLAGRDLTDYLMKILTERGYSFTTTAEREIVRDIKEKLCYVALDFEQEMSNAASSSALEKSYELPDGQVITIGNERFRCPEALFQPSFLGMESAGIHETTYNSIMKCDVDIRKDLYANTVLSGGSTMYPGISDRMQKEISALAPSTMKIKIVAPPERKYSVWIGGSILASLSTFQQMWISKQEYDESGPGIVHRKCF</sequence>
<gene>
    <name type="primary">ACT5</name>
</gene>